<evidence type="ECO:0000255" key="1">
    <source>
        <dbReference type="HAMAP-Rule" id="MF_01384"/>
    </source>
</evidence>
<organism>
    <name type="scientific">Burkholderia mallei (strain NCTC 10247)</name>
    <dbReference type="NCBI Taxonomy" id="320389"/>
    <lineage>
        <taxon>Bacteria</taxon>
        <taxon>Pseudomonadati</taxon>
        <taxon>Pseudomonadota</taxon>
        <taxon>Betaproteobacteria</taxon>
        <taxon>Burkholderiales</taxon>
        <taxon>Burkholderiaceae</taxon>
        <taxon>Burkholderia</taxon>
        <taxon>pseudomallei group</taxon>
    </lineage>
</organism>
<reference key="1">
    <citation type="journal article" date="2010" name="Genome Biol. Evol.">
        <title>Continuing evolution of Burkholderia mallei through genome reduction and large-scale rearrangements.</title>
        <authorList>
            <person name="Losada L."/>
            <person name="Ronning C.M."/>
            <person name="DeShazer D."/>
            <person name="Woods D."/>
            <person name="Fedorova N."/>
            <person name="Kim H.S."/>
            <person name="Shabalina S.A."/>
            <person name="Pearson T.R."/>
            <person name="Brinkac L."/>
            <person name="Tan P."/>
            <person name="Nandi T."/>
            <person name="Crabtree J."/>
            <person name="Badger J."/>
            <person name="Beckstrom-Sternberg S."/>
            <person name="Saqib M."/>
            <person name="Schutzer S.E."/>
            <person name="Keim P."/>
            <person name="Nierman W.C."/>
        </authorList>
    </citation>
    <scope>NUCLEOTIDE SEQUENCE [LARGE SCALE GENOMIC DNA]</scope>
    <source>
        <strain>NCTC 10247</strain>
    </source>
</reference>
<name>URED_BURM7</name>
<feature type="chain" id="PRO_0000340435" description="Urease accessory protein UreD">
    <location>
        <begin position="1"/>
        <end position="291"/>
    </location>
</feature>
<accession>A3MMU8</accession>
<comment type="function">
    <text evidence="1">Required for maturation of urease via the functional incorporation of the urease nickel metallocenter.</text>
</comment>
<comment type="subunit">
    <text evidence="1">UreD, UreF and UreG form a complex that acts as a GTP-hydrolysis-dependent molecular chaperone, activating the urease apoprotein by helping to assemble the nickel containing metallocenter of UreC. The UreE protein probably delivers the nickel.</text>
</comment>
<comment type="subcellular location">
    <subcellularLocation>
        <location evidence="1">Cytoplasm</location>
    </subcellularLocation>
</comment>
<comment type="similarity">
    <text evidence="1">Belongs to the UreD family.</text>
</comment>
<sequence>MSAHEPHTSLVRPAAKAWHARLELGFERQPGGRTALAHRRHVGPLRVQRALYPEGDAICHAVIVHPPGGVAGGDRLEIDVRLDAGTHAVLTTPGATKWYKSNGLDARQRIDIDVGAHAKLDWLPQNNLFFDAAHASLEFVLALGDGASVLGWDATQLGRQAAGEAWSAGSIASFSKIVGPSGRPLWVERARLDAGDPLRAAPQGLGGFAVYGTLWALGAACTEALAESIAPALPFDDALRAGVTCVAPGTLLIRALAHSMEALQRLLAEQWLALRPIVHGVDPKPLRLWQT</sequence>
<proteinExistence type="inferred from homology"/>
<gene>
    <name evidence="1" type="primary">ureD</name>
    <name type="ordered locus">BMA10247_2053</name>
</gene>
<dbReference type="EMBL" id="CP000548">
    <property type="protein sequence ID" value="ABO04555.1"/>
    <property type="molecule type" value="Genomic_DNA"/>
</dbReference>
<dbReference type="RefSeq" id="WP_004185533.1">
    <property type="nucleotide sequence ID" value="NZ_CP007802.1"/>
</dbReference>
<dbReference type="SMR" id="A3MMU8"/>
<dbReference type="KEGG" id="bmaz:BM44_1173"/>
<dbReference type="KEGG" id="bmn:BMA10247_2053"/>
<dbReference type="PATRIC" id="fig|320389.8.peg.1310"/>
<dbReference type="GO" id="GO:0005737">
    <property type="term" value="C:cytoplasm"/>
    <property type="evidence" value="ECO:0007669"/>
    <property type="project" value="UniProtKB-SubCell"/>
</dbReference>
<dbReference type="GO" id="GO:0016151">
    <property type="term" value="F:nickel cation binding"/>
    <property type="evidence" value="ECO:0007669"/>
    <property type="project" value="UniProtKB-UniRule"/>
</dbReference>
<dbReference type="HAMAP" id="MF_01384">
    <property type="entry name" value="UreD"/>
    <property type="match status" value="1"/>
</dbReference>
<dbReference type="InterPro" id="IPR002669">
    <property type="entry name" value="UreD"/>
</dbReference>
<dbReference type="PANTHER" id="PTHR33643">
    <property type="entry name" value="UREASE ACCESSORY PROTEIN D"/>
    <property type="match status" value="1"/>
</dbReference>
<dbReference type="PANTHER" id="PTHR33643:SF1">
    <property type="entry name" value="UREASE ACCESSORY PROTEIN D"/>
    <property type="match status" value="1"/>
</dbReference>
<dbReference type="Pfam" id="PF01774">
    <property type="entry name" value="UreD"/>
    <property type="match status" value="1"/>
</dbReference>
<protein>
    <recommendedName>
        <fullName evidence="1">Urease accessory protein UreD</fullName>
    </recommendedName>
</protein>
<keyword id="KW-0143">Chaperone</keyword>
<keyword id="KW-0963">Cytoplasm</keyword>
<keyword id="KW-0996">Nickel insertion</keyword>